<accession>P28807</accession>
<accession>Q9M3M9</accession>
<proteinExistence type="evidence at protein level"/>
<sequence>MVKLRLKRCGRKQRAVYRIVAIDVRSRREGRDLQKVGFYDPIKSQTYLNVPAILDFLEKGAQPTETVYDILKRAEVFKEFRLNQTKFN</sequence>
<organism>
    <name type="scientific">Spinacia oleracea</name>
    <name type="common">Spinach</name>
    <dbReference type="NCBI Taxonomy" id="3562"/>
    <lineage>
        <taxon>Eukaryota</taxon>
        <taxon>Viridiplantae</taxon>
        <taxon>Streptophyta</taxon>
        <taxon>Embryophyta</taxon>
        <taxon>Tracheophyta</taxon>
        <taxon>Spermatophyta</taxon>
        <taxon>Magnoliopsida</taxon>
        <taxon>eudicotyledons</taxon>
        <taxon>Gunneridae</taxon>
        <taxon>Pentapetalae</taxon>
        <taxon>Caryophyllales</taxon>
        <taxon>Chenopodiaceae</taxon>
        <taxon>Chenopodioideae</taxon>
        <taxon>Anserineae</taxon>
        <taxon>Spinacia</taxon>
    </lineage>
</organism>
<geneLocation type="chloroplast"/>
<name>RR16_SPIOL</name>
<keyword id="KW-0002">3D-structure</keyword>
<keyword id="KW-0150">Chloroplast</keyword>
<keyword id="KW-0903">Direct protein sequencing</keyword>
<keyword id="KW-0934">Plastid</keyword>
<keyword id="KW-1185">Reference proteome</keyword>
<keyword id="KW-0687">Ribonucleoprotein</keyword>
<keyword id="KW-0689">Ribosomal protein</keyword>
<gene>
    <name evidence="1" type="primary">rps16</name>
</gene>
<comment type="function">
    <text evidence="6 7">Component of the chloroplast ribosome (chloro-ribosome), a dedicated translation machinery responsible for the synthesis of chloroplast genome-encoded proteins, including proteins of the transcription and translation machinery and components of the photosynthetic apparatus.</text>
</comment>
<comment type="subunit">
    <text evidence="2 3">Component of the chloroplast small ribosomal subunit (SSU). Mature 70S chloroplast ribosomes of higher plants consist of a small (30S) and a large (50S) subunit. The 30S small subunit contains 1 molecule of ribosomal RNA (16S rRNA) and 24 different proteins. The 50S large subunit contains 3 rRNA molecules (23S, 5S and 4.5S rRNA) and 33 different proteins.</text>
</comment>
<comment type="subcellular location">
    <subcellularLocation>
        <location evidence="2 3">Plastid</location>
        <location evidence="2 3">Chloroplast</location>
    </subcellularLocation>
</comment>
<comment type="mass spectrometry"/>
<comment type="mass spectrometry"/>
<comment type="similarity">
    <text evidence="1">Belongs to the bacterial ribosomal protein bS16 family.</text>
</comment>
<reference key="1">
    <citation type="journal article" date="2001" name="Plant Mol. Biol.">
        <title>The plastid chromosome of spinach (Spinacia oleracea): complete nucleotide sequence and gene organization.</title>
        <authorList>
            <person name="Schmitz-Linneweber C."/>
            <person name="Maier R.M."/>
            <person name="Alcaraz J.-P."/>
            <person name="Cottet A."/>
            <person name="Herrmann R.G."/>
            <person name="Mache R."/>
        </authorList>
    </citation>
    <scope>NUCLEOTIDE SEQUENCE [LARGE SCALE GENOMIC DNA]</scope>
    <source>
        <strain>cv. Geant d'hiver</strain>
        <strain>cv. Monatol</strain>
    </source>
</reference>
<reference key="2">
    <citation type="journal article" date="1992" name="Plant Mol. Biol.">
        <title>Purification and characterization of seven chloroplast ribosomal proteins: evidence that organelle ribosomal protein genes are functional and that NH2-terminal processing occurs via multiple pathways in chloroplasts.</title>
        <authorList>
            <person name="Schmidt J."/>
            <person name="Herfurth E."/>
            <person name="Subramanian A.R."/>
        </authorList>
    </citation>
    <scope>PROTEIN SEQUENCE OF 1-25</scope>
    <source>
        <strain>cv. Alwaro</strain>
    </source>
</reference>
<reference key="3">
    <citation type="journal article" date="2000" name="J. Biol. Chem.">
        <title>The plastid ribosomal proteins. Identification of all the proteins in the 30S subunit of an organelle ribosome (chloroplast).</title>
        <authorList>
            <person name="Yamaguchi K."/>
            <person name="von Knoblauch K."/>
            <person name="Subramanian A.R."/>
        </authorList>
    </citation>
    <scope>PROTEIN SEQUENCE OF 1-25</scope>
    <scope>SUBUNIT</scope>
    <scope>SUBCELLULAR LOCATION</scope>
    <scope>MASS SPECTROMETRY</scope>
    <source>
        <strain>cv. Alwaro</strain>
        <tissue>Leaf</tissue>
    </source>
</reference>
<reference key="4">
    <citation type="journal article" date="2007" name="Proc. Natl. Acad. Sci. U.S.A.">
        <title>Cryo-EM study of the spinach chloroplast ribosome reveals the structural and functional roles of plastid-specific ribosomal proteins.</title>
        <authorList>
            <person name="Sharma M.R."/>
            <person name="Wilson D.N."/>
            <person name="Datta P.P."/>
            <person name="Barat C."/>
            <person name="Schluenzen F."/>
            <person name="Fucini P."/>
            <person name="Agrawal R.K."/>
        </authorList>
    </citation>
    <scope>STRUCTURE BY ELECTRON MICROSCOPY (9.4 ANGSTROMS)</scope>
</reference>
<reference key="5">
    <citation type="journal article" date="2017" name="EMBO J.">
        <title>The complete structure of the chloroplast 70S ribosome in complex with translation factor pY.</title>
        <authorList>
            <person name="Bieri P."/>
            <person name="Leibundgut M."/>
            <person name="Saurer M."/>
            <person name="Boehringer D."/>
            <person name="Ban N."/>
        </authorList>
    </citation>
    <scope>STRUCTURE BY ELECTRON MICROSCOPY (3.40 ANGSTROMS)</scope>
    <scope>SUBUNIT</scope>
    <scope>SUBCELLULAR LOCATION</scope>
</reference>
<feature type="chain" id="PRO_0000167321" description="Small ribosomal subunit protein bS16c">
    <location>
        <begin position="1"/>
        <end position="88"/>
    </location>
</feature>
<evidence type="ECO:0000255" key="1">
    <source>
        <dbReference type="HAMAP-Rule" id="MF_00385"/>
    </source>
</evidence>
<evidence type="ECO:0000269" key="2">
    <source>
    </source>
</evidence>
<evidence type="ECO:0000269" key="3">
    <source>
    </source>
</evidence>
<evidence type="ECO:0000303" key="4">
    <source>
    </source>
</evidence>
<evidence type="ECO:0000303" key="5">
    <source>
    </source>
</evidence>
<evidence type="ECO:0000305" key="6">
    <source>
    </source>
</evidence>
<evidence type="ECO:0000305" key="7">
    <source>
    </source>
</evidence>
<protein>
    <recommendedName>
        <fullName evidence="5">Small ribosomal subunit protein bS16c</fullName>
    </recommendedName>
    <alternativeName>
        <fullName evidence="1 4">30S ribosomal protein S16, chloroplastic</fullName>
    </alternativeName>
</protein>
<dbReference type="EMBL" id="AJ400848">
    <property type="protein sequence ID" value="CAB88707.1"/>
    <property type="molecule type" value="Genomic_DNA"/>
</dbReference>
<dbReference type="PIR" id="S26233">
    <property type="entry name" value="S26233"/>
</dbReference>
<dbReference type="RefSeq" id="NP_054914.1">
    <property type="nucleotide sequence ID" value="NC_002202.1"/>
</dbReference>
<dbReference type="PDB" id="4V61">
    <property type="method" value="EM"/>
    <property type="resolution" value="9.40 A"/>
    <property type="chains" value="AP=1-88"/>
</dbReference>
<dbReference type="PDB" id="5MMJ">
    <property type="method" value="EM"/>
    <property type="resolution" value="3.65 A"/>
    <property type="chains" value="p=1-88"/>
</dbReference>
<dbReference type="PDB" id="5MMM">
    <property type="method" value="EM"/>
    <property type="resolution" value="3.40 A"/>
    <property type="chains" value="p=1-88"/>
</dbReference>
<dbReference type="PDB" id="5X8P">
    <property type="method" value="EM"/>
    <property type="resolution" value="3.40 A"/>
    <property type="chains" value="p=1-88"/>
</dbReference>
<dbReference type="PDB" id="5X8R">
    <property type="method" value="EM"/>
    <property type="resolution" value="3.70 A"/>
    <property type="chains" value="p=1-88"/>
</dbReference>
<dbReference type="PDB" id="6ERI">
    <property type="method" value="EM"/>
    <property type="resolution" value="3.00 A"/>
    <property type="chains" value="BP=1-81"/>
</dbReference>
<dbReference type="PDBsum" id="4V61"/>
<dbReference type="PDBsum" id="5MMJ"/>
<dbReference type="PDBsum" id="5MMM"/>
<dbReference type="PDBsum" id="5X8P"/>
<dbReference type="PDBsum" id="5X8R"/>
<dbReference type="PDBsum" id="6ERI"/>
<dbReference type="EMDB" id="EMD-3532"/>
<dbReference type="EMDB" id="EMD-3533"/>
<dbReference type="EMDB" id="EMD-3941"/>
<dbReference type="EMDB" id="EMD-6709"/>
<dbReference type="EMDB" id="EMD-6710"/>
<dbReference type="SMR" id="P28807"/>
<dbReference type="FunCoup" id="P28807">
    <property type="interactions" value="8"/>
</dbReference>
<dbReference type="STRING" id="3562.P28807"/>
<dbReference type="GeneID" id="2715639"/>
<dbReference type="KEGG" id="soe:2715639"/>
<dbReference type="InParanoid" id="P28807"/>
<dbReference type="OrthoDB" id="407221at2759"/>
<dbReference type="Proteomes" id="UP001155700">
    <property type="component" value="Chloroplast Pltd"/>
</dbReference>
<dbReference type="GO" id="GO:0009507">
    <property type="term" value="C:chloroplast"/>
    <property type="evidence" value="ECO:0007669"/>
    <property type="project" value="UniProtKB-SubCell"/>
</dbReference>
<dbReference type="GO" id="GO:0005739">
    <property type="term" value="C:mitochondrion"/>
    <property type="evidence" value="ECO:0007669"/>
    <property type="project" value="GOC"/>
</dbReference>
<dbReference type="GO" id="GO:0015935">
    <property type="term" value="C:small ribosomal subunit"/>
    <property type="evidence" value="ECO:0000318"/>
    <property type="project" value="GO_Central"/>
</dbReference>
<dbReference type="GO" id="GO:0003735">
    <property type="term" value="F:structural constituent of ribosome"/>
    <property type="evidence" value="ECO:0000318"/>
    <property type="project" value="GO_Central"/>
</dbReference>
<dbReference type="GO" id="GO:0032543">
    <property type="term" value="P:mitochondrial translation"/>
    <property type="evidence" value="ECO:0007669"/>
    <property type="project" value="TreeGrafter"/>
</dbReference>
<dbReference type="FunFam" id="3.30.1320.10:FF:000003">
    <property type="entry name" value="30S ribosomal protein S16, chloroplastic"/>
    <property type="match status" value="1"/>
</dbReference>
<dbReference type="Gene3D" id="3.30.1320.10">
    <property type="match status" value="1"/>
</dbReference>
<dbReference type="HAMAP" id="MF_00385">
    <property type="entry name" value="Ribosomal_bS16"/>
    <property type="match status" value="1"/>
</dbReference>
<dbReference type="InterPro" id="IPR000307">
    <property type="entry name" value="Ribosomal_bS16"/>
</dbReference>
<dbReference type="InterPro" id="IPR020592">
    <property type="entry name" value="Ribosomal_bS16_CS"/>
</dbReference>
<dbReference type="InterPro" id="IPR023803">
    <property type="entry name" value="Ribosomal_bS16_dom_sf"/>
</dbReference>
<dbReference type="NCBIfam" id="TIGR00002">
    <property type="entry name" value="S16"/>
    <property type="match status" value="1"/>
</dbReference>
<dbReference type="PANTHER" id="PTHR12919">
    <property type="entry name" value="30S RIBOSOMAL PROTEIN S16"/>
    <property type="match status" value="1"/>
</dbReference>
<dbReference type="PANTHER" id="PTHR12919:SF20">
    <property type="entry name" value="SMALL RIBOSOMAL SUBUNIT PROTEIN BS16M"/>
    <property type="match status" value="1"/>
</dbReference>
<dbReference type="Pfam" id="PF00886">
    <property type="entry name" value="Ribosomal_S16"/>
    <property type="match status" value="1"/>
</dbReference>
<dbReference type="SUPFAM" id="SSF54565">
    <property type="entry name" value="Ribosomal protein S16"/>
    <property type="match status" value="1"/>
</dbReference>
<dbReference type="PROSITE" id="PS00732">
    <property type="entry name" value="RIBOSOMAL_S16"/>
    <property type="match status" value="1"/>
</dbReference>